<accession>Q8FSF7</accession>
<organism>
    <name type="scientific">Corynebacterium efficiens (strain DSM 44549 / YS-314 / AJ 12310 / JCM 11189 / NBRC 100395)</name>
    <dbReference type="NCBI Taxonomy" id="196164"/>
    <lineage>
        <taxon>Bacteria</taxon>
        <taxon>Bacillati</taxon>
        <taxon>Actinomycetota</taxon>
        <taxon>Actinomycetes</taxon>
        <taxon>Mycobacteriales</taxon>
        <taxon>Corynebacteriaceae</taxon>
        <taxon>Corynebacterium</taxon>
    </lineage>
</organism>
<name>HEM3_COREF</name>
<keyword id="KW-0627">Porphyrin biosynthesis</keyword>
<keyword id="KW-1185">Reference proteome</keyword>
<keyword id="KW-0808">Transferase</keyword>
<protein>
    <recommendedName>
        <fullName evidence="1">Porphobilinogen deaminase</fullName>
        <shortName evidence="1">PBG</shortName>
        <ecNumber evidence="1">2.5.1.61</ecNumber>
    </recommendedName>
    <alternativeName>
        <fullName evidence="1">Hydroxymethylbilane synthase</fullName>
        <shortName evidence="1">HMBS</shortName>
    </alternativeName>
    <alternativeName>
        <fullName evidence="1">Pre-uroporphyrinogen synthase</fullName>
    </alternativeName>
</protein>
<sequence>MTLRIGTRGSKLATTQAGHMRDRLKHFGRDAELTIVTTPGDVNMSPVERIGVGVFTQALRDALVADEIDVAVHSFKDLPTAPDPRFHLVVPTRADARDALIARDGLTLEELPEGAKVGTSAPRRISQLKALRPDLEILPLRGNIDTRMGKVTSGELDAVVLAFAGLSRVGMQDRATQVFDPDMLMPAPAQGALAIECRVEDEDIITGLNMLMHADTYVTAVAERTVLNRLEAGCTAPVAAHATLDGYAGDTMTLTAGVFALDGSEQLVFSAQGAGERPEELAEQVAAQLIEQGAATLLG</sequence>
<gene>
    <name evidence="1" type="primary">hemC</name>
    <name type="ordered locus">CE0436</name>
</gene>
<reference key="1">
    <citation type="journal article" date="2003" name="Genome Res.">
        <title>Comparative complete genome sequence analysis of the amino acid replacements responsible for the thermostability of Corynebacterium efficiens.</title>
        <authorList>
            <person name="Nishio Y."/>
            <person name="Nakamura Y."/>
            <person name="Kawarabayasi Y."/>
            <person name="Usuda Y."/>
            <person name="Kimura E."/>
            <person name="Sugimoto S."/>
            <person name="Matsui K."/>
            <person name="Yamagishi A."/>
            <person name="Kikuchi H."/>
            <person name="Ikeo K."/>
            <person name="Gojobori T."/>
        </authorList>
    </citation>
    <scope>NUCLEOTIDE SEQUENCE [LARGE SCALE GENOMIC DNA]</scope>
    <source>
        <strain>DSM 44549 / YS-314 / AJ 12310 / JCM 11189 / NBRC 100395</strain>
    </source>
</reference>
<proteinExistence type="inferred from homology"/>
<feature type="chain" id="PRO_0000142929" description="Porphobilinogen deaminase">
    <location>
        <begin position="1"/>
        <end position="299"/>
    </location>
</feature>
<feature type="modified residue" description="S-(dipyrrolylmethanemethyl)cysteine" evidence="1">
    <location>
        <position position="234"/>
    </location>
</feature>
<dbReference type="EC" id="2.5.1.61" evidence="1"/>
<dbReference type="EMBL" id="BA000035">
    <property type="protein sequence ID" value="BAC17246.1"/>
    <property type="molecule type" value="Genomic_DNA"/>
</dbReference>
<dbReference type="RefSeq" id="WP_006770327.1">
    <property type="nucleotide sequence ID" value="NC_004369.1"/>
</dbReference>
<dbReference type="SMR" id="Q8FSF7"/>
<dbReference type="STRING" id="196164.gene:10740834"/>
<dbReference type="KEGG" id="cef:CE0436"/>
<dbReference type="eggNOG" id="COG0181">
    <property type="taxonomic scope" value="Bacteria"/>
</dbReference>
<dbReference type="HOGENOM" id="CLU_019704_1_0_11"/>
<dbReference type="OrthoDB" id="9810298at2"/>
<dbReference type="UniPathway" id="UPA00251">
    <property type="reaction ID" value="UER00319"/>
</dbReference>
<dbReference type="Proteomes" id="UP000001409">
    <property type="component" value="Chromosome"/>
</dbReference>
<dbReference type="GO" id="GO:0005737">
    <property type="term" value="C:cytoplasm"/>
    <property type="evidence" value="ECO:0007669"/>
    <property type="project" value="TreeGrafter"/>
</dbReference>
<dbReference type="GO" id="GO:0004418">
    <property type="term" value="F:hydroxymethylbilane synthase activity"/>
    <property type="evidence" value="ECO:0007669"/>
    <property type="project" value="UniProtKB-UniRule"/>
</dbReference>
<dbReference type="GO" id="GO:0006782">
    <property type="term" value="P:protoporphyrinogen IX biosynthetic process"/>
    <property type="evidence" value="ECO:0007669"/>
    <property type="project" value="UniProtKB-UniRule"/>
</dbReference>
<dbReference type="FunFam" id="3.40.190.10:FF:000005">
    <property type="entry name" value="Porphobilinogen deaminase"/>
    <property type="match status" value="1"/>
</dbReference>
<dbReference type="Gene3D" id="3.40.190.10">
    <property type="entry name" value="Periplasmic binding protein-like II"/>
    <property type="match status" value="2"/>
</dbReference>
<dbReference type="Gene3D" id="3.30.160.40">
    <property type="entry name" value="Porphobilinogen deaminase, C-terminal domain"/>
    <property type="match status" value="1"/>
</dbReference>
<dbReference type="HAMAP" id="MF_00260">
    <property type="entry name" value="Porphobil_deam"/>
    <property type="match status" value="1"/>
</dbReference>
<dbReference type="InterPro" id="IPR000860">
    <property type="entry name" value="HemC"/>
</dbReference>
<dbReference type="InterPro" id="IPR022419">
    <property type="entry name" value="Porphobilin_deaminase_cofac_BS"/>
</dbReference>
<dbReference type="InterPro" id="IPR022417">
    <property type="entry name" value="Porphobilin_deaminase_N"/>
</dbReference>
<dbReference type="InterPro" id="IPR022418">
    <property type="entry name" value="Porphobilinogen_deaminase_C"/>
</dbReference>
<dbReference type="InterPro" id="IPR036803">
    <property type="entry name" value="Porphobilinogen_deaminase_C_sf"/>
</dbReference>
<dbReference type="NCBIfam" id="TIGR00212">
    <property type="entry name" value="hemC"/>
    <property type="match status" value="1"/>
</dbReference>
<dbReference type="PANTHER" id="PTHR11557">
    <property type="entry name" value="PORPHOBILINOGEN DEAMINASE"/>
    <property type="match status" value="1"/>
</dbReference>
<dbReference type="PANTHER" id="PTHR11557:SF0">
    <property type="entry name" value="PORPHOBILINOGEN DEAMINASE"/>
    <property type="match status" value="1"/>
</dbReference>
<dbReference type="Pfam" id="PF01379">
    <property type="entry name" value="Porphobil_deam"/>
    <property type="match status" value="1"/>
</dbReference>
<dbReference type="Pfam" id="PF03900">
    <property type="entry name" value="Porphobil_deamC"/>
    <property type="match status" value="1"/>
</dbReference>
<dbReference type="PIRSF" id="PIRSF001438">
    <property type="entry name" value="4pyrrol_synth_OHMeBilane_synth"/>
    <property type="match status" value="1"/>
</dbReference>
<dbReference type="PRINTS" id="PR00151">
    <property type="entry name" value="PORPHBDMNASE"/>
</dbReference>
<dbReference type="SUPFAM" id="SSF53850">
    <property type="entry name" value="Periplasmic binding protein-like II"/>
    <property type="match status" value="1"/>
</dbReference>
<dbReference type="SUPFAM" id="SSF54782">
    <property type="entry name" value="Porphobilinogen deaminase (hydroxymethylbilane synthase), C-terminal domain"/>
    <property type="match status" value="1"/>
</dbReference>
<dbReference type="PROSITE" id="PS00533">
    <property type="entry name" value="PORPHOBILINOGEN_DEAM"/>
    <property type="match status" value="1"/>
</dbReference>
<evidence type="ECO:0000255" key="1">
    <source>
        <dbReference type="HAMAP-Rule" id="MF_00260"/>
    </source>
</evidence>
<comment type="function">
    <text evidence="1">Tetrapolymerization of the monopyrrole PBG into the hydroxymethylbilane pre-uroporphyrinogen in several discrete steps.</text>
</comment>
<comment type="catalytic activity">
    <reaction evidence="1">
        <text>4 porphobilinogen + H2O = hydroxymethylbilane + 4 NH4(+)</text>
        <dbReference type="Rhea" id="RHEA:13185"/>
        <dbReference type="ChEBI" id="CHEBI:15377"/>
        <dbReference type="ChEBI" id="CHEBI:28938"/>
        <dbReference type="ChEBI" id="CHEBI:57845"/>
        <dbReference type="ChEBI" id="CHEBI:58126"/>
        <dbReference type="EC" id="2.5.1.61"/>
    </reaction>
</comment>
<comment type="cofactor">
    <cofactor evidence="1">
        <name>dipyrromethane</name>
        <dbReference type="ChEBI" id="CHEBI:60342"/>
    </cofactor>
    <text evidence="1">Binds 1 dipyrromethane group covalently.</text>
</comment>
<comment type="pathway">
    <text evidence="1">Porphyrin-containing compound metabolism; protoporphyrin-IX biosynthesis; coproporphyrinogen-III from 5-aminolevulinate: step 2/4.</text>
</comment>
<comment type="subunit">
    <text evidence="1">Monomer.</text>
</comment>
<comment type="miscellaneous">
    <text evidence="1">The porphobilinogen subunits are added to the dipyrromethane group.</text>
</comment>
<comment type="similarity">
    <text evidence="1">Belongs to the HMBS family.</text>
</comment>